<name>C4BPA_HUMAN</name>
<organism>
    <name type="scientific">Homo sapiens</name>
    <name type="common">Human</name>
    <dbReference type="NCBI Taxonomy" id="9606"/>
    <lineage>
        <taxon>Eukaryota</taxon>
        <taxon>Metazoa</taxon>
        <taxon>Chordata</taxon>
        <taxon>Craniata</taxon>
        <taxon>Vertebrata</taxon>
        <taxon>Euteleostomi</taxon>
        <taxon>Mammalia</taxon>
        <taxon>Eutheria</taxon>
        <taxon>Euarchontoglires</taxon>
        <taxon>Primates</taxon>
        <taxon>Haplorrhini</taxon>
        <taxon>Catarrhini</taxon>
        <taxon>Hominidae</taxon>
        <taxon>Homo</taxon>
    </lineage>
</organism>
<accession>P04003</accession>
<accession>Q5VVQ8</accession>
<protein>
    <recommendedName>
        <fullName>C4b-binding protein alpha chain</fullName>
        <shortName>C4bp</shortName>
    </recommendedName>
    <alternativeName>
        <fullName>Proline-rich protein</fullName>
        <shortName>PRP</shortName>
    </alternativeName>
</protein>
<proteinExistence type="evidence at protein level"/>
<reference key="1">
    <citation type="journal article" date="1989" name="Biochem. Biophys. Res. Commun.">
        <title>Molecular cloning of the cDNA coding for proline-rich protein (PRP): identity of PRP as C4b-binding protein.</title>
        <authorList>
            <person name="Matsuguchi T."/>
            <person name="Okamura S."/>
            <person name="Aso T."/>
            <person name="Sata T."/>
            <person name="Niho Y."/>
        </authorList>
    </citation>
    <scope>NUCLEOTIDE SEQUENCE [MRNA]</scope>
    <source>
        <tissue>Liver</tissue>
    </source>
</reference>
<reference key="2">
    <citation type="journal article" date="1991" name="Biochem. Biophys. Res. Commun.">
        <title>Genomic organization of the alpha chain of the human C4b-binding protein gene.</title>
        <authorList>
            <person name="Aso T."/>
            <person name="Okamura S."/>
            <person name="Matsuguchi T."/>
            <person name="Sakamoto N."/>
            <person name="Sata T."/>
            <person name="Niho Y."/>
        </authorList>
    </citation>
    <scope>NUCLEOTIDE SEQUENCE [GENOMIC DNA / MRNA]</scope>
</reference>
<reference key="3">
    <citation type="journal article" date="2004" name="Nat. Genet.">
        <title>Complete sequencing and characterization of 21,243 full-length human cDNAs.</title>
        <authorList>
            <person name="Ota T."/>
            <person name="Suzuki Y."/>
            <person name="Nishikawa T."/>
            <person name="Otsuki T."/>
            <person name="Sugiyama T."/>
            <person name="Irie R."/>
            <person name="Wakamatsu A."/>
            <person name="Hayashi K."/>
            <person name="Sato H."/>
            <person name="Nagai K."/>
            <person name="Kimura K."/>
            <person name="Makita H."/>
            <person name="Sekine M."/>
            <person name="Obayashi M."/>
            <person name="Nishi T."/>
            <person name="Shibahara T."/>
            <person name="Tanaka T."/>
            <person name="Ishii S."/>
            <person name="Yamamoto J."/>
            <person name="Saito K."/>
            <person name="Kawai Y."/>
            <person name="Isono Y."/>
            <person name="Nakamura Y."/>
            <person name="Nagahari K."/>
            <person name="Murakami K."/>
            <person name="Yasuda T."/>
            <person name="Iwayanagi T."/>
            <person name="Wagatsuma M."/>
            <person name="Shiratori A."/>
            <person name="Sudo H."/>
            <person name="Hosoiri T."/>
            <person name="Kaku Y."/>
            <person name="Kodaira H."/>
            <person name="Kondo H."/>
            <person name="Sugawara M."/>
            <person name="Takahashi M."/>
            <person name="Kanda K."/>
            <person name="Yokoi T."/>
            <person name="Furuya T."/>
            <person name="Kikkawa E."/>
            <person name="Omura Y."/>
            <person name="Abe K."/>
            <person name="Kamihara K."/>
            <person name="Katsuta N."/>
            <person name="Sato K."/>
            <person name="Tanikawa M."/>
            <person name="Yamazaki M."/>
            <person name="Ninomiya K."/>
            <person name="Ishibashi T."/>
            <person name="Yamashita H."/>
            <person name="Murakawa K."/>
            <person name="Fujimori K."/>
            <person name="Tanai H."/>
            <person name="Kimata M."/>
            <person name="Watanabe M."/>
            <person name="Hiraoka S."/>
            <person name="Chiba Y."/>
            <person name="Ishida S."/>
            <person name="Ono Y."/>
            <person name="Takiguchi S."/>
            <person name="Watanabe S."/>
            <person name="Yosida M."/>
            <person name="Hotuta T."/>
            <person name="Kusano J."/>
            <person name="Kanehori K."/>
            <person name="Takahashi-Fujii A."/>
            <person name="Hara H."/>
            <person name="Tanase T.-O."/>
            <person name="Nomura Y."/>
            <person name="Togiya S."/>
            <person name="Komai F."/>
            <person name="Hara R."/>
            <person name="Takeuchi K."/>
            <person name="Arita M."/>
            <person name="Imose N."/>
            <person name="Musashino K."/>
            <person name="Yuuki H."/>
            <person name="Oshima A."/>
            <person name="Sasaki N."/>
            <person name="Aotsuka S."/>
            <person name="Yoshikawa Y."/>
            <person name="Matsunawa H."/>
            <person name="Ichihara T."/>
            <person name="Shiohata N."/>
            <person name="Sano S."/>
            <person name="Moriya S."/>
            <person name="Momiyama H."/>
            <person name="Satoh N."/>
            <person name="Takami S."/>
            <person name="Terashima Y."/>
            <person name="Suzuki O."/>
            <person name="Nakagawa S."/>
            <person name="Senoh A."/>
            <person name="Mizoguchi H."/>
            <person name="Goto Y."/>
            <person name="Shimizu F."/>
            <person name="Wakebe H."/>
            <person name="Hishigaki H."/>
            <person name="Watanabe T."/>
            <person name="Sugiyama A."/>
            <person name="Takemoto M."/>
            <person name="Kawakami B."/>
            <person name="Yamazaki M."/>
            <person name="Watanabe K."/>
            <person name="Kumagai A."/>
            <person name="Itakura S."/>
            <person name="Fukuzumi Y."/>
            <person name="Fujimori Y."/>
            <person name="Komiyama M."/>
            <person name="Tashiro H."/>
            <person name="Tanigami A."/>
            <person name="Fujiwara T."/>
            <person name="Ono T."/>
            <person name="Yamada K."/>
            <person name="Fujii Y."/>
            <person name="Ozaki K."/>
            <person name="Hirao M."/>
            <person name="Ohmori Y."/>
            <person name="Kawabata A."/>
            <person name="Hikiji T."/>
            <person name="Kobatake N."/>
            <person name="Inagaki H."/>
            <person name="Ikema Y."/>
            <person name="Okamoto S."/>
            <person name="Okitani R."/>
            <person name="Kawakami T."/>
            <person name="Noguchi S."/>
            <person name="Itoh T."/>
            <person name="Shigeta K."/>
            <person name="Senba T."/>
            <person name="Matsumura K."/>
            <person name="Nakajima Y."/>
            <person name="Mizuno T."/>
            <person name="Morinaga M."/>
            <person name="Sasaki M."/>
            <person name="Togashi T."/>
            <person name="Oyama M."/>
            <person name="Hata H."/>
            <person name="Watanabe M."/>
            <person name="Komatsu T."/>
            <person name="Mizushima-Sugano J."/>
            <person name="Satoh T."/>
            <person name="Shirai Y."/>
            <person name="Takahashi Y."/>
            <person name="Nakagawa K."/>
            <person name="Okumura K."/>
            <person name="Nagase T."/>
            <person name="Nomura N."/>
            <person name="Kikuchi H."/>
            <person name="Masuho Y."/>
            <person name="Yamashita R."/>
            <person name="Nakai K."/>
            <person name="Yada T."/>
            <person name="Nakamura Y."/>
            <person name="Ohara O."/>
            <person name="Isogai T."/>
            <person name="Sugano S."/>
        </authorList>
    </citation>
    <scope>NUCLEOTIDE SEQUENCE [LARGE SCALE MRNA]</scope>
    <source>
        <tissue>Lung</tissue>
    </source>
</reference>
<reference key="4">
    <citation type="submission" date="2005-09" db="EMBL/GenBank/DDBJ databases">
        <authorList>
            <person name="Mural R.J."/>
            <person name="Istrail S."/>
            <person name="Sutton G."/>
            <person name="Florea L."/>
            <person name="Halpern A.L."/>
            <person name="Mobarry C.M."/>
            <person name="Lippert R."/>
            <person name="Walenz B."/>
            <person name="Shatkay H."/>
            <person name="Dew I."/>
            <person name="Miller J.R."/>
            <person name="Flanigan M.J."/>
            <person name="Edwards N.J."/>
            <person name="Bolanos R."/>
            <person name="Fasulo D."/>
            <person name="Halldorsson B.V."/>
            <person name="Hannenhalli S."/>
            <person name="Turner R."/>
            <person name="Yooseph S."/>
            <person name="Lu F."/>
            <person name="Nusskern D.R."/>
            <person name="Shue B.C."/>
            <person name="Zheng X.H."/>
            <person name="Zhong F."/>
            <person name="Delcher A.L."/>
            <person name="Huson D.H."/>
            <person name="Kravitz S.A."/>
            <person name="Mouchard L."/>
            <person name="Reinert K."/>
            <person name="Remington K.A."/>
            <person name="Clark A.G."/>
            <person name="Waterman M.S."/>
            <person name="Eichler E.E."/>
            <person name="Adams M.D."/>
            <person name="Hunkapiller M.W."/>
            <person name="Myers E.W."/>
            <person name="Venter J.C."/>
        </authorList>
    </citation>
    <scope>NUCLEOTIDE SEQUENCE [LARGE SCALE GENOMIC DNA]</scope>
</reference>
<reference key="5">
    <citation type="journal article" date="2004" name="Genome Res.">
        <title>The status, quality, and expansion of the NIH full-length cDNA project: the Mammalian Gene Collection (MGC).</title>
        <authorList>
            <consortium name="The MGC Project Team"/>
        </authorList>
    </citation>
    <scope>NUCLEOTIDE SEQUENCE [LARGE SCALE MRNA]</scope>
    <source>
        <tissue>Lung</tissue>
    </source>
</reference>
<reference key="6">
    <citation type="journal article" date="1988" name="FEBS Lett.">
        <title>Derivation of the sequence of the signal peptide in human C4b-binding protein and interspecies cross-hybridisation of the C4bp cDNA sequence.</title>
        <authorList>
            <person name="Lintin S.J."/>
            <person name="Lewin A.R."/>
            <person name="Reid K.B.M."/>
        </authorList>
    </citation>
    <scope>NUCLEOTIDE SEQUENCE [MRNA] OF 9-81</scope>
</reference>
<reference key="7">
    <citation type="journal article" date="1986" name="FEBS Lett.">
        <title>Studies on the structure of the human C4b-binding protein gene.</title>
        <authorList>
            <person name="Lintin S.J."/>
            <person name="Reid K.B.M."/>
        </authorList>
    </citation>
    <scope>NUCLEOTIDE SEQUENCE [GENOMIC DNA] OF 203-288</scope>
</reference>
<reference key="8">
    <citation type="journal article" date="1985" name="Biochem. J.">
        <title>Molecular cloning and characterization of the cDNA coding for C4b-binding protein, a regulatory protein of the classical pathway of the human complement system.</title>
        <authorList>
            <person name="Chung L.P."/>
            <person name="Bentley D.R."/>
            <person name="Reid K.B.M."/>
        </authorList>
    </citation>
    <scope>NUCLEOTIDE SEQUENCE [MRNA] OF 80-597</scope>
</reference>
<reference key="9">
    <citation type="journal article" date="1985" name="Mol. Immunol.">
        <title>Amino acid sequence studies of human C4b-binding protein: N-terminal sequence analysis and alignment of the fragments produced by limited proteolysis with chymotrypsin and the peptides produced by cyanogen bromide treatment.</title>
        <authorList>
            <person name="Chung L.P."/>
            <person name="Gagnon J."/>
            <person name="Reid K.B.M."/>
        </authorList>
    </citation>
    <scope>PROTEIN SEQUENCE OF 49-88</scope>
</reference>
<reference key="10">
    <citation type="journal article" date="2004" name="Proteomics">
        <title>Screening for N-glycosylated proteins by liquid chromatography mass spectrometry.</title>
        <authorList>
            <person name="Bunkenborg J."/>
            <person name="Pilch B.J."/>
            <person name="Podtelejnikov A.V."/>
            <person name="Wisniewski J.R."/>
        </authorList>
    </citation>
    <scope>GLYCOSYLATION [LARGE SCALE ANALYSIS] AT ASN-506 AND ASN-528</scope>
    <source>
        <tissue>Plasma</tissue>
    </source>
</reference>
<reference key="11">
    <citation type="journal article" date="2005" name="J. Proteome Res.">
        <title>Human plasma N-glycoproteome analysis by immunoaffinity subtraction, hydrazide chemistry, and mass spectrometry.</title>
        <authorList>
            <person name="Liu T."/>
            <person name="Qian W.-J."/>
            <person name="Gritsenko M.A."/>
            <person name="Camp D.G. II"/>
            <person name="Monroe M.E."/>
            <person name="Moore R.J."/>
            <person name="Smith R.D."/>
        </authorList>
    </citation>
    <scope>GLYCOSYLATION [LARGE SCALE ANALYSIS] AT ASN-221 AND ASN-506</scope>
    <source>
        <tissue>Plasma</tissue>
    </source>
</reference>
<reference key="12">
    <citation type="journal article" date="2009" name="J. Proteome Res.">
        <title>Glycoproteomics analysis of human liver tissue by combination of multiple enzyme digestion and hydrazide chemistry.</title>
        <authorList>
            <person name="Chen R."/>
            <person name="Jiang X."/>
            <person name="Sun D."/>
            <person name="Han G."/>
            <person name="Wang F."/>
            <person name="Ye M."/>
            <person name="Wang L."/>
            <person name="Zou H."/>
        </authorList>
    </citation>
    <scope>GLYCOSYLATION [LARGE SCALE ANALYSIS] AT ASN-221 AND ASN-506</scope>
    <source>
        <tissue>Liver</tissue>
    </source>
</reference>
<reference key="13">
    <citation type="journal article" date="2014" name="J. Proteomics">
        <title>An enzyme assisted RP-RPLC approach for in-depth analysis of human liver phosphoproteome.</title>
        <authorList>
            <person name="Bian Y."/>
            <person name="Song C."/>
            <person name="Cheng K."/>
            <person name="Dong M."/>
            <person name="Wang F."/>
            <person name="Huang J."/>
            <person name="Sun D."/>
            <person name="Wang L."/>
            <person name="Ye M."/>
            <person name="Zou H."/>
        </authorList>
    </citation>
    <scope>IDENTIFICATION BY MASS SPECTROMETRY [LARGE SCALE ANALYSIS]</scope>
    <source>
        <tissue>Liver</tissue>
    </source>
</reference>
<reference key="14">
    <citation type="journal article" date="2013" name="Results Immunol.">
        <title>Complement regulator C4BP binds to Staphylococcus aureus surface proteins SdrE and Bbp inhibiting bacterial opsonization and killing.</title>
        <authorList>
            <person name="Hair P.S."/>
            <person name="Foley C.K."/>
            <person name="Krishna N.K."/>
            <person name="Nyalwidhe J.O."/>
            <person name="Geoghegan J.A."/>
            <person name="Foster T.J."/>
            <person name="Cunnion K.M."/>
        </authorList>
    </citation>
    <scope>INTERACTION WITH STAPHYLOCOCCUS AUREUS PROTEIN SDRE (MICROBIAL INFECTION)</scope>
</reference>
<reference key="15">
    <citation type="journal article" date="1983" name="Proc. Natl. Acad. Sci. U.S.A.">
        <title>Visualization of human C4b-binding protein and its complexes with vitamin K-dependent protein S and complement protein C4b.</title>
        <authorList>
            <person name="Dahlback B."/>
            <person name="Smith C.A."/>
            <person name="Mueller-Eberhard H.J."/>
        </authorList>
    </citation>
    <scope>STRUCTURE BY ELECTRON MICROSCOPY</scope>
    <scope>LIGAND-BINDING</scope>
</reference>
<reference key="16">
    <citation type="journal article" date="2006" name="J. Biol. Chem.">
        <title>Human C4b-binding protein, structural basis for interaction with streptococcal M protein, a major bacterial virulence factor.</title>
        <authorList>
            <person name="Jenkins H.T."/>
            <person name="Mark L."/>
            <person name="Ball G."/>
            <person name="Persson J."/>
            <person name="Lindahl G."/>
            <person name="Uhrin D."/>
            <person name="Blom A.M."/>
            <person name="Barlow P.N."/>
        </authorList>
    </citation>
    <scope>STRUCTURE BY NMR OF 49-172</scope>
    <scope>DISULFIDE BONDS</scope>
</reference>
<comment type="function">
    <text>Controls the classical pathway of complement activation. It binds as a cofactor to C3b/C4b inactivator (C3bINA), which then hydrolyzes the complement fragment C4b. It also accelerates the degradation of the C4bC2a complex (C3 convertase) by dissociating the complement fragment C2a. Alpha chain binds C4b. It also interacts with anticoagulant protein S and with serum amyloid P component.</text>
</comment>
<comment type="subunit">
    <text evidence="3">Disulfide-linked complex of alpha and beta chains of 3 possible sorts: a 570 kDa complex of 7 alpha chains and 1 beta chain, a 530 kDa homoheptamer of alpha chains or a 500 kDa complex of 6 alpha chains and 1 beta chain. The central body of the alpha chain homomer supports tentacles, each with the binding site for C4b at the end.</text>
</comment>
<comment type="subunit">
    <text evidence="6">(Microbial infection) Interacts with Staphylococcus aureus protein SdrE; this interaction inhibits complement-mediated bacterial opsonization.</text>
</comment>
<comment type="interaction">
    <interactant intactId="EBI-978348">
        <id>P04003</id>
    </interactant>
    <interactant intactId="EBI-22033103">
        <id>PRO_0000023526</id>
        <label>CRP</label>
        <dbReference type="UniProtKB" id="P02741"/>
    </interactant>
    <organismsDiffer>false</organismsDiffer>
    <experiments>4</experiments>
</comment>
<comment type="interaction">
    <interactant intactId="EBI-978348">
        <id>P04003</id>
    </interactant>
    <interactant intactId="EBI-978341">
        <id>P13050</id>
        <label>arp4</label>
    </interactant>
    <organismsDiffer>true</organismsDiffer>
    <experiments>5</experiments>
</comment>
<comment type="subcellular location">
    <subcellularLocation>
        <location>Secreted</location>
    </subcellularLocation>
</comment>
<comment type="tissue specificity">
    <text>Chylomicrons in the plasma.</text>
</comment>
<comment type="caution">
    <text evidence="9">It is uncertain whether Met-1 or Met-17 is the initiator.</text>
</comment>
<evidence type="ECO:0000255" key="1">
    <source>
        <dbReference type="PROSITE-ProRule" id="PRU00302"/>
    </source>
</evidence>
<evidence type="ECO:0000269" key="2">
    <source>
    </source>
</evidence>
<evidence type="ECO:0000269" key="3">
    <source>
    </source>
</evidence>
<evidence type="ECO:0000269" key="4">
    <source>
    </source>
</evidence>
<evidence type="ECO:0000269" key="5">
    <source>
    </source>
</evidence>
<evidence type="ECO:0000269" key="6">
    <source>
    </source>
</evidence>
<evidence type="ECO:0000269" key="7">
    <source>
    </source>
</evidence>
<evidence type="ECO:0000269" key="8">
    <source>
    </source>
</evidence>
<evidence type="ECO:0000305" key="9"/>
<evidence type="ECO:0007829" key="10">
    <source>
        <dbReference type="PDB" id="4B0F"/>
    </source>
</evidence>
<evidence type="ECO:0007829" key="11">
    <source>
        <dbReference type="PDB" id="5HYP"/>
    </source>
</evidence>
<evidence type="ECO:0007829" key="12">
    <source>
        <dbReference type="PDB" id="5HZP"/>
    </source>
</evidence>
<evidence type="ECO:0007829" key="13">
    <source>
        <dbReference type="PDB" id="5I0Q"/>
    </source>
</evidence>
<dbReference type="EMBL" id="M31452">
    <property type="protein sequence ID" value="AAA36507.1"/>
    <property type="molecule type" value="mRNA"/>
</dbReference>
<dbReference type="EMBL" id="M62486">
    <property type="protein sequence ID" value="AAA36506.1"/>
    <property type="molecule type" value="Genomic_DNA"/>
</dbReference>
<dbReference type="EMBL" id="M62475">
    <property type="protein sequence ID" value="AAA36506.1"/>
    <property type="status" value="JOINED"/>
    <property type="molecule type" value="Genomic_DNA"/>
</dbReference>
<dbReference type="EMBL" id="M62476">
    <property type="protein sequence ID" value="AAA36506.1"/>
    <property type="status" value="JOINED"/>
    <property type="molecule type" value="Genomic_DNA"/>
</dbReference>
<dbReference type="EMBL" id="M62477">
    <property type="protein sequence ID" value="AAA36506.1"/>
    <property type="status" value="JOINED"/>
    <property type="molecule type" value="Genomic_DNA"/>
</dbReference>
<dbReference type="EMBL" id="M62478">
    <property type="protein sequence ID" value="AAA36506.1"/>
    <property type="status" value="JOINED"/>
    <property type="molecule type" value="Genomic_DNA"/>
</dbReference>
<dbReference type="EMBL" id="M62479">
    <property type="protein sequence ID" value="AAA36506.1"/>
    <property type="status" value="JOINED"/>
    <property type="molecule type" value="Genomic_DNA"/>
</dbReference>
<dbReference type="EMBL" id="M62480">
    <property type="protein sequence ID" value="AAA36506.1"/>
    <property type="status" value="JOINED"/>
    <property type="molecule type" value="Genomic_DNA"/>
</dbReference>
<dbReference type="EMBL" id="M62481">
    <property type="protein sequence ID" value="AAA36506.1"/>
    <property type="status" value="JOINED"/>
    <property type="molecule type" value="Genomic_DNA"/>
</dbReference>
<dbReference type="EMBL" id="M62482">
    <property type="protein sequence ID" value="AAA36506.1"/>
    <property type="status" value="JOINED"/>
    <property type="molecule type" value="Genomic_DNA"/>
</dbReference>
<dbReference type="EMBL" id="M62484">
    <property type="protein sequence ID" value="AAA36506.1"/>
    <property type="status" value="JOINED"/>
    <property type="molecule type" value="Genomic_DNA"/>
</dbReference>
<dbReference type="EMBL" id="M62485">
    <property type="protein sequence ID" value="AAA36506.1"/>
    <property type="status" value="JOINED"/>
    <property type="molecule type" value="Genomic_DNA"/>
</dbReference>
<dbReference type="EMBL" id="AK313164">
    <property type="protein sequence ID" value="BAG35982.1"/>
    <property type="molecule type" value="mRNA"/>
</dbReference>
<dbReference type="EMBL" id="CH471100">
    <property type="protein sequence ID" value="EAW93502.1"/>
    <property type="molecule type" value="Genomic_DNA"/>
</dbReference>
<dbReference type="EMBL" id="CH471100">
    <property type="protein sequence ID" value="EAW93503.1"/>
    <property type="molecule type" value="Genomic_DNA"/>
</dbReference>
<dbReference type="EMBL" id="BC022312">
    <property type="protein sequence ID" value="AAH22312.1"/>
    <property type="molecule type" value="mRNA"/>
</dbReference>
<dbReference type="EMBL" id="X07853">
    <property type="protein sequence ID" value="CAA30701.1"/>
    <property type="molecule type" value="mRNA"/>
</dbReference>
<dbReference type="EMBL" id="X04284">
    <property type="protein sequence ID" value="CAB51244.1"/>
    <property type="molecule type" value="Genomic_DNA"/>
</dbReference>
<dbReference type="EMBL" id="X04296">
    <property type="protein sequence ID" value="CAA27839.1"/>
    <property type="molecule type" value="Genomic_DNA"/>
</dbReference>
<dbReference type="EMBL" id="X02865">
    <property type="protein sequence ID" value="CAA26617.1"/>
    <property type="molecule type" value="mRNA"/>
</dbReference>
<dbReference type="CCDS" id="CCDS1477.1"/>
<dbReference type="PIR" id="A33568">
    <property type="entry name" value="NBHUC4"/>
</dbReference>
<dbReference type="RefSeq" id="NP_000706.1">
    <property type="nucleotide sequence ID" value="NM_000715.4"/>
</dbReference>
<dbReference type="RefSeq" id="XP_005273308.1">
    <property type="nucleotide sequence ID" value="XM_005273251.3"/>
</dbReference>
<dbReference type="RefSeq" id="XP_005273309.1">
    <property type="nucleotide sequence ID" value="XM_005273252.5"/>
</dbReference>
<dbReference type="PDB" id="2A55">
    <property type="method" value="NMR"/>
    <property type="chains" value="A=49-172"/>
</dbReference>
<dbReference type="PDB" id="4B0F">
    <property type="method" value="X-ray"/>
    <property type="resolution" value="2.80 A"/>
    <property type="chains" value="A/B/C/D/E/F/G=540-597"/>
</dbReference>
<dbReference type="PDB" id="5HYP">
    <property type="method" value="X-ray"/>
    <property type="resolution" value="3.02 A"/>
    <property type="chains" value="A=49-172"/>
</dbReference>
<dbReference type="PDB" id="5HYT">
    <property type="method" value="X-ray"/>
    <property type="resolution" value="2.54 A"/>
    <property type="chains" value="B/D/F/H=49-172"/>
</dbReference>
<dbReference type="PDB" id="5HYU">
    <property type="method" value="X-ray"/>
    <property type="resolution" value="2.56 A"/>
    <property type="chains" value="B=49-172"/>
</dbReference>
<dbReference type="PDB" id="5HZP">
    <property type="method" value="X-ray"/>
    <property type="resolution" value="2.74 A"/>
    <property type="chains" value="B/D=49-172"/>
</dbReference>
<dbReference type="PDB" id="5I0Q">
    <property type="method" value="X-ray"/>
    <property type="resolution" value="2.29 A"/>
    <property type="chains" value="B=49-172"/>
</dbReference>
<dbReference type="PDB" id="8TCB">
    <property type="method" value="X-ray"/>
    <property type="resolution" value="2.69 A"/>
    <property type="chains" value="A/B=49-172"/>
</dbReference>
<dbReference type="PDB" id="8TGT">
    <property type="method" value="X-ray"/>
    <property type="resolution" value="2.50 A"/>
    <property type="chains" value="C=49-172"/>
</dbReference>
<dbReference type="PDBsum" id="2A55"/>
<dbReference type="PDBsum" id="4B0F"/>
<dbReference type="PDBsum" id="5HYP"/>
<dbReference type="PDBsum" id="5HYT"/>
<dbReference type="PDBsum" id="5HYU"/>
<dbReference type="PDBsum" id="5HZP"/>
<dbReference type="PDBsum" id="5I0Q"/>
<dbReference type="PDBsum" id="8TCB"/>
<dbReference type="PDBsum" id="8TGT"/>
<dbReference type="SMR" id="P04003"/>
<dbReference type="BioGRID" id="107183">
    <property type="interactions" value="45"/>
</dbReference>
<dbReference type="FunCoup" id="P04003">
    <property type="interactions" value="577"/>
</dbReference>
<dbReference type="IntAct" id="P04003">
    <property type="interactions" value="36"/>
</dbReference>
<dbReference type="STRING" id="9606.ENSP00000356037"/>
<dbReference type="DrugBank" id="DB09130">
    <property type="generic name" value="Copper"/>
</dbReference>
<dbReference type="DrugBank" id="DB01593">
    <property type="generic name" value="Zinc"/>
</dbReference>
<dbReference type="DrugBank" id="DB14487">
    <property type="generic name" value="Zinc acetate"/>
</dbReference>
<dbReference type="DrugBank" id="DB14533">
    <property type="generic name" value="Zinc chloride"/>
</dbReference>
<dbReference type="DrugBank" id="DB14548">
    <property type="generic name" value="Zinc sulfate, unspecified form"/>
</dbReference>
<dbReference type="CarbonylDB" id="P04003"/>
<dbReference type="GlyConnect" id="1051">
    <property type="glycosylation" value="9 N-Linked glycans (2 sites)"/>
</dbReference>
<dbReference type="GlyCosmos" id="P04003">
    <property type="glycosylation" value="8 sites, 17 glycans"/>
</dbReference>
<dbReference type="GlyGen" id="P04003">
    <property type="glycosylation" value="9 sites, 26 N-linked glycans (3 sites), 2 O-linked glycans (5 sites)"/>
</dbReference>
<dbReference type="iPTMnet" id="P04003"/>
<dbReference type="PhosphoSitePlus" id="P04003"/>
<dbReference type="SwissPalm" id="P04003"/>
<dbReference type="BioMuta" id="C4BPA"/>
<dbReference type="DMDM" id="416733"/>
<dbReference type="jPOST" id="P04003"/>
<dbReference type="MassIVE" id="P04003"/>
<dbReference type="PaxDb" id="9606-ENSP00000356037"/>
<dbReference type="PeptideAtlas" id="P04003"/>
<dbReference type="ProteomicsDB" id="51632"/>
<dbReference type="Pumba" id="P04003"/>
<dbReference type="Antibodypedia" id="694">
    <property type="antibodies" value="298 antibodies from 30 providers"/>
</dbReference>
<dbReference type="DNASU" id="722"/>
<dbReference type="Ensembl" id="ENST00000367070.8">
    <property type="protein sequence ID" value="ENSP00000356037.3"/>
    <property type="gene ID" value="ENSG00000123838.11"/>
</dbReference>
<dbReference type="GeneID" id="722"/>
<dbReference type="KEGG" id="hsa:722"/>
<dbReference type="MANE-Select" id="ENST00000367070.8">
    <property type="protein sequence ID" value="ENSP00000356037.3"/>
    <property type="RefSeq nucleotide sequence ID" value="NM_000715.4"/>
    <property type="RefSeq protein sequence ID" value="NP_000706.1"/>
</dbReference>
<dbReference type="UCSC" id="uc001hfo.3">
    <property type="organism name" value="human"/>
</dbReference>
<dbReference type="AGR" id="HGNC:1325"/>
<dbReference type="CTD" id="722"/>
<dbReference type="DisGeNET" id="722"/>
<dbReference type="GeneCards" id="C4BPA"/>
<dbReference type="HGNC" id="HGNC:1325">
    <property type="gene designation" value="C4BPA"/>
</dbReference>
<dbReference type="HPA" id="ENSG00000123838">
    <property type="expression patterns" value="Tissue enriched (liver)"/>
</dbReference>
<dbReference type="MalaCards" id="C4BPA"/>
<dbReference type="MIM" id="120830">
    <property type="type" value="gene"/>
</dbReference>
<dbReference type="neXtProt" id="NX_P04003"/>
<dbReference type="OpenTargets" id="ENSG00000123838"/>
<dbReference type="PharmGKB" id="PA25905"/>
<dbReference type="VEuPathDB" id="HostDB:ENSG00000123838"/>
<dbReference type="eggNOG" id="ENOG502SHRK">
    <property type="taxonomic scope" value="Eukaryota"/>
</dbReference>
<dbReference type="GeneTree" id="ENSGT00940000154640"/>
<dbReference type="HOGENOM" id="CLU_020107_5_2_1"/>
<dbReference type="InParanoid" id="P04003"/>
<dbReference type="OMA" id="VLRYRCH"/>
<dbReference type="OrthoDB" id="8961654at2759"/>
<dbReference type="PAN-GO" id="P04003">
    <property type="GO annotations" value="2 GO annotations based on evolutionary models"/>
</dbReference>
<dbReference type="PhylomeDB" id="P04003"/>
<dbReference type="TreeFam" id="TF334137"/>
<dbReference type="PathwayCommons" id="P04003"/>
<dbReference type="Reactome" id="R-HSA-977606">
    <property type="pathway name" value="Regulation of Complement cascade"/>
</dbReference>
<dbReference type="SignaLink" id="P04003"/>
<dbReference type="BioGRID-ORCS" id="722">
    <property type="hits" value="10 hits in 1146 CRISPR screens"/>
</dbReference>
<dbReference type="ChiTaRS" id="C4BPA">
    <property type="organism name" value="human"/>
</dbReference>
<dbReference type="EvolutionaryTrace" id="P04003"/>
<dbReference type="GenomeRNAi" id="722"/>
<dbReference type="Pharos" id="P04003">
    <property type="development level" value="Tbio"/>
</dbReference>
<dbReference type="PRO" id="PR:P04003"/>
<dbReference type="Proteomes" id="UP000005640">
    <property type="component" value="Chromosome 1"/>
</dbReference>
<dbReference type="RNAct" id="P04003">
    <property type="molecule type" value="protein"/>
</dbReference>
<dbReference type="Bgee" id="ENSG00000123838">
    <property type="expression patterns" value="Expressed in right lobe of liver and 115 other cell types or tissues"/>
</dbReference>
<dbReference type="ExpressionAtlas" id="P04003">
    <property type="expression patterns" value="baseline and differential"/>
</dbReference>
<dbReference type="GO" id="GO:0072562">
    <property type="term" value="C:blood microparticle"/>
    <property type="evidence" value="ECO:0007005"/>
    <property type="project" value="UniProtKB"/>
</dbReference>
<dbReference type="GO" id="GO:0005576">
    <property type="term" value="C:extracellular region"/>
    <property type="evidence" value="ECO:0000303"/>
    <property type="project" value="UniProtKB"/>
</dbReference>
<dbReference type="GO" id="GO:0005615">
    <property type="term" value="C:extracellular space"/>
    <property type="evidence" value="ECO:0000314"/>
    <property type="project" value="BHF-UCL"/>
</dbReference>
<dbReference type="GO" id="GO:0005886">
    <property type="term" value="C:plasma membrane"/>
    <property type="evidence" value="ECO:0000318"/>
    <property type="project" value="GO_Central"/>
</dbReference>
<dbReference type="GO" id="GO:0003723">
    <property type="term" value="F:RNA binding"/>
    <property type="evidence" value="ECO:0007005"/>
    <property type="project" value="UniProtKB"/>
</dbReference>
<dbReference type="GO" id="GO:0006958">
    <property type="term" value="P:complement activation, classical pathway"/>
    <property type="evidence" value="ECO:0007669"/>
    <property type="project" value="UniProtKB-KW"/>
</dbReference>
<dbReference type="GO" id="GO:0045087">
    <property type="term" value="P:innate immune response"/>
    <property type="evidence" value="ECO:0007669"/>
    <property type="project" value="UniProtKB-KW"/>
</dbReference>
<dbReference type="GO" id="GO:0045959">
    <property type="term" value="P:negative regulation of complement activation, classical pathway"/>
    <property type="evidence" value="ECO:0000314"/>
    <property type="project" value="BHF-UCL"/>
</dbReference>
<dbReference type="GO" id="GO:0045732">
    <property type="term" value="P:positive regulation of protein catabolic process"/>
    <property type="evidence" value="ECO:0000314"/>
    <property type="project" value="BHF-UCL"/>
</dbReference>
<dbReference type="GO" id="GO:1903027">
    <property type="term" value="P:regulation of opsonization"/>
    <property type="evidence" value="ECO:0000314"/>
    <property type="project" value="BHF-UCL"/>
</dbReference>
<dbReference type="GO" id="GO:0009609">
    <property type="term" value="P:response to symbiotic bacterium"/>
    <property type="evidence" value="ECO:0000314"/>
    <property type="project" value="BHF-UCL"/>
</dbReference>
<dbReference type="GO" id="GO:0002456">
    <property type="term" value="P:T cell mediated immunity"/>
    <property type="evidence" value="ECO:0000318"/>
    <property type="project" value="GO_Central"/>
</dbReference>
<dbReference type="CDD" id="cd00033">
    <property type="entry name" value="CCP"/>
    <property type="match status" value="8"/>
</dbReference>
<dbReference type="FunFam" id="2.10.70.10:FF:000070">
    <property type="entry name" value="Complement C3d receptor 2"/>
    <property type="match status" value="1"/>
</dbReference>
<dbReference type="FunFam" id="2.10.70.10:FF:000055">
    <property type="entry name" value="Complement decay-accelerating factor, GPI-anchored"/>
    <property type="match status" value="1"/>
</dbReference>
<dbReference type="FunFam" id="2.10.70.10:FF:000014">
    <property type="entry name" value="Membrane cofactor protein"/>
    <property type="match status" value="2"/>
</dbReference>
<dbReference type="FunFam" id="2.10.70.10:FF:000050">
    <property type="entry name" value="sushi domain-containing protein 5"/>
    <property type="match status" value="1"/>
</dbReference>
<dbReference type="FunFam" id="1.20.5.3730:FF:000001">
    <property type="entry name" value="Zona pellucida sperm-binding protein 3 receptor"/>
    <property type="match status" value="1"/>
</dbReference>
<dbReference type="FunFam" id="2.10.70.10:FF:000095">
    <property type="entry name" value="Zona pellucida sperm-binding protein 3 receptor"/>
    <property type="match status" value="1"/>
</dbReference>
<dbReference type="FunFam" id="2.10.70.10:FF:000115">
    <property type="entry name" value="Zona pellucida sperm-binding protein 3 receptor"/>
    <property type="match status" value="1"/>
</dbReference>
<dbReference type="Gene3D" id="1.20.5.3730">
    <property type="match status" value="1"/>
</dbReference>
<dbReference type="Gene3D" id="2.10.70.10">
    <property type="entry name" value="Complement Module, domain 1"/>
    <property type="match status" value="8"/>
</dbReference>
<dbReference type="InterPro" id="IPR040514">
    <property type="entry name" value="C4bp_oligo"/>
</dbReference>
<dbReference type="InterPro" id="IPR050350">
    <property type="entry name" value="Compl-Cell_Adhes-Reg"/>
</dbReference>
<dbReference type="InterPro" id="IPR035976">
    <property type="entry name" value="Sushi/SCR/CCP_sf"/>
</dbReference>
<dbReference type="InterPro" id="IPR000436">
    <property type="entry name" value="Sushi_SCR_CCP_dom"/>
</dbReference>
<dbReference type="PANTHER" id="PTHR19325:SF566">
    <property type="entry name" value="C4B-BINDING PROTEIN ALPHA CHAIN"/>
    <property type="match status" value="1"/>
</dbReference>
<dbReference type="PANTHER" id="PTHR19325">
    <property type="entry name" value="COMPLEMENT COMPONENT-RELATED SUSHI DOMAIN-CONTAINING"/>
    <property type="match status" value="1"/>
</dbReference>
<dbReference type="Pfam" id="PF18453">
    <property type="entry name" value="C4bp_oligo"/>
    <property type="match status" value="1"/>
</dbReference>
<dbReference type="Pfam" id="PF00084">
    <property type="entry name" value="Sushi"/>
    <property type="match status" value="8"/>
</dbReference>
<dbReference type="SMART" id="SM00032">
    <property type="entry name" value="CCP"/>
    <property type="match status" value="8"/>
</dbReference>
<dbReference type="SUPFAM" id="SSF57535">
    <property type="entry name" value="Complement control module/SCR domain"/>
    <property type="match status" value="8"/>
</dbReference>
<dbReference type="PROSITE" id="PS50923">
    <property type="entry name" value="SUSHI"/>
    <property type="match status" value="8"/>
</dbReference>
<feature type="signal peptide" evidence="8">
    <location>
        <begin position="1"/>
        <end position="48"/>
    </location>
</feature>
<feature type="chain" id="PRO_0000005888" description="C4b-binding protein alpha chain">
    <location>
        <begin position="49"/>
        <end position="597"/>
    </location>
</feature>
<feature type="domain" description="Sushi 1" evidence="1">
    <location>
        <begin position="49"/>
        <end position="110"/>
    </location>
</feature>
<feature type="domain" description="Sushi 2" evidence="1">
    <location>
        <begin position="111"/>
        <end position="172"/>
    </location>
</feature>
<feature type="domain" description="Sushi 3" evidence="1">
    <location>
        <begin position="173"/>
        <end position="236"/>
    </location>
</feature>
<feature type="domain" description="Sushi 4" evidence="1">
    <location>
        <begin position="237"/>
        <end position="296"/>
    </location>
</feature>
<feature type="domain" description="Sushi 5" evidence="1">
    <location>
        <begin position="297"/>
        <end position="362"/>
    </location>
</feature>
<feature type="domain" description="Sushi 6" evidence="1">
    <location>
        <begin position="363"/>
        <end position="424"/>
    </location>
</feature>
<feature type="domain" description="Sushi 7" evidence="1">
    <location>
        <begin position="425"/>
        <end position="482"/>
    </location>
</feature>
<feature type="domain" description="Sushi 8" evidence="1">
    <location>
        <begin position="483"/>
        <end position="540"/>
    </location>
</feature>
<feature type="glycosylation site" description="N-linked (GlcNAc...) asparagine" evidence="4 5 7">
    <location>
        <position position="221"/>
    </location>
</feature>
<feature type="glycosylation site" description="N-linked (GlcNAc...) asparagine" evidence="2 4 5 7">
    <location>
        <position position="506"/>
    </location>
</feature>
<feature type="glycosylation site" description="N-linked (GlcNAc...) asparagine" evidence="2 7">
    <location>
        <position position="528"/>
    </location>
</feature>
<feature type="disulfide bond" evidence="1 3">
    <location>
        <begin position="50"/>
        <end position="96"/>
    </location>
</feature>
<feature type="disulfide bond" evidence="1 3">
    <location>
        <begin position="81"/>
        <end position="108"/>
    </location>
</feature>
<feature type="disulfide bond" evidence="1 3">
    <location>
        <begin position="113"/>
        <end position="154"/>
    </location>
</feature>
<feature type="disulfide bond" evidence="1 3">
    <location>
        <begin position="140"/>
        <end position="170"/>
    </location>
</feature>
<feature type="disulfide bond" evidence="1">
    <location>
        <begin position="175"/>
        <end position="217"/>
    </location>
</feature>
<feature type="disulfide bond" evidence="1">
    <location>
        <begin position="203"/>
        <end position="234"/>
    </location>
</feature>
<feature type="disulfide bond" evidence="1">
    <location>
        <begin position="239"/>
        <end position="281"/>
    </location>
</feature>
<feature type="disulfide bond" evidence="1">
    <location>
        <begin position="267"/>
        <end position="294"/>
    </location>
</feature>
<feature type="disulfide bond" evidence="1">
    <location>
        <begin position="299"/>
        <end position="348"/>
    </location>
</feature>
<feature type="disulfide bond" evidence="1">
    <location>
        <begin position="332"/>
        <end position="360"/>
    </location>
</feature>
<feature type="disulfide bond" evidence="1">
    <location>
        <begin position="365"/>
        <end position="409"/>
    </location>
</feature>
<feature type="disulfide bond" evidence="1">
    <location>
        <begin position="399"/>
        <end position="422"/>
    </location>
</feature>
<feature type="disulfide bond" evidence="1">
    <location>
        <begin position="426"/>
        <end position="468"/>
    </location>
</feature>
<feature type="disulfide bond" evidence="1">
    <location>
        <begin position="454"/>
        <end position="480"/>
    </location>
</feature>
<feature type="disulfide bond" evidence="1">
    <location>
        <begin position="484"/>
        <end position="525"/>
    </location>
</feature>
<feature type="disulfide bond" evidence="1">
    <location>
        <begin position="511"/>
        <end position="538"/>
    </location>
</feature>
<feature type="disulfide bond" description="Interchain (with beta chain)" evidence="1">
    <location>
        <position position="546"/>
    </location>
</feature>
<feature type="disulfide bond" description="Interchain (with beta chain)" evidence="1">
    <location>
        <position position="558"/>
    </location>
</feature>
<feature type="sequence variant" id="VAR_061123" description="In dbSNP:rs55867570.">
    <original>P</original>
    <variation>Q</variation>
    <location>
        <position position="4"/>
    </location>
</feature>
<feature type="sequence variant" id="VAR_048815" description="In dbSNP:rs17020956.">
    <original>A</original>
    <variation>V</variation>
    <location>
        <position position="60"/>
    </location>
</feature>
<feature type="sequence variant" id="VAR_061124" description="In dbSNP:rs45574833.">
    <original>R</original>
    <variation>H</variation>
    <location>
        <position position="240"/>
    </location>
</feature>
<feature type="sequence variant" id="VAR_024420" description="In dbSNP:rs4844573.">
    <original>I</original>
    <variation>T</variation>
    <location>
        <position position="300"/>
    </location>
</feature>
<feature type="sequence variant" id="VAR_001978">
    <original>Y</original>
    <variation>H</variation>
    <location>
        <position position="357"/>
    </location>
</feature>
<feature type="sequence variant" id="VAR_012038" description="In dbSNP:rs1801341.">
    <original>W</original>
    <variation>L</variation>
    <location>
        <position position="473"/>
    </location>
</feature>
<feature type="strand" evidence="13">
    <location>
        <begin position="57"/>
        <end position="63"/>
    </location>
</feature>
<feature type="strand" evidence="11">
    <location>
        <begin position="69"/>
        <end position="71"/>
    </location>
</feature>
<feature type="strand" evidence="13">
    <location>
        <begin position="76"/>
        <end position="81"/>
    </location>
</feature>
<feature type="strand" evidence="13">
    <location>
        <begin position="85"/>
        <end position="87"/>
    </location>
</feature>
<feature type="strand" evidence="13">
    <location>
        <begin position="93"/>
        <end position="96"/>
    </location>
</feature>
<feature type="strand" evidence="11">
    <location>
        <begin position="98"/>
        <end position="100"/>
    </location>
</feature>
<feature type="strand" evidence="13">
    <location>
        <begin position="108"/>
        <end position="110"/>
    </location>
</feature>
<feature type="strand" evidence="13">
    <location>
        <begin position="122"/>
        <end position="128"/>
    </location>
</feature>
<feature type="strand" evidence="12">
    <location>
        <begin position="130"/>
        <end position="133"/>
    </location>
</feature>
<feature type="strand" evidence="13">
    <location>
        <begin position="135"/>
        <end position="140"/>
    </location>
</feature>
<feature type="strand" evidence="13">
    <location>
        <begin position="145"/>
        <end position="148"/>
    </location>
</feature>
<feature type="strand" evidence="13">
    <location>
        <begin position="150"/>
        <end position="157"/>
    </location>
</feature>
<feature type="strand" evidence="13">
    <location>
        <begin position="160"/>
        <end position="165"/>
    </location>
</feature>
<feature type="strand" evidence="13">
    <location>
        <begin position="169"/>
        <end position="171"/>
    </location>
</feature>
<feature type="helix" evidence="10">
    <location>
        <begin position="547"/>
        <end position="555"/>
    </location>
</feature>
<feature type="strand" evidence="10">
    <location>
        <begin position="558"/>
        <end position="561"/>
    </location>
</feature>
<feature type="helix" evidence="10">
    <location>
        <begin position="562"/>
        <end position="589"/>
    </location>
</feature>
<feature type="helix" evidence="10">
    <location>
        <begin position="591"/>
        <end position="596"/>
    </location>
</feature>
<sequence>MHPPKTPSGALHRKRKMAAWPFSRLWKVSDPILFQMTLIAALLPAVLGNCGPPPTLSFAAPMDITLTETRFKTGTTLKYTCLPGYVRSHSTQTLTCNSDGEWVYNTFCIYKRCRHPGELRNGQVEIKTDLSFGSQIEFSCSEGFFLIGSTTSRCEVQDRGVGWSHPLPQCEIVKCKPPPDIRNGRHSGEENFYAYGFSVTYSCDPRFSLLGHASISCTVENETIGVWRPSPPTCEKITCRKPDVSHGEMVSGFGPIYNYKDTIVFKCQKGFVLRGSSVIHCDADSKWNPSPPACEPNSCINLPDIPHASWETYPRPTKEDVYVVGTVLRYRCHPGYKPTTDEPTTVICQKNLRWTPYQGCEALCCPEPKLNNGEITQHRKSRPANHCVYFYGDEISFSCHETSRFSAICQGDGTWSPRTPSCGDICNFPPKIAHGHYKQSSSYSFFKEEIIYECDKGYILVGQAKLSCSYSHWSAPAPQCKALCRKPELVNGRLSVDKDQYVEPENVTIQCDSGYGVVGPQSITCSGNRTWYPEVPKCEWETPEGCEQVLTGKRLMQCLPNPEDVKMALEVYKLSLEIEQLELQRDSARQSTLDKEL</sequence>
<gene>
    <name type="primary">C4BPA</name>
    <name type="synonym">C4BP</name>
</gene>
<keyword id="KW-0002">3D-structure</keyword>
<keyword id="KW-0180">Complement pathway</keyword>
<keyword id="KW-0903">Direct protein sequencing</keyword>
<keyword id="KW-1015">Disulfide bond</keyword>
<keyword id="KW-0325">Glycoprotein</keyword>
<keyword id="KW-0391">Immunity</keyword>
<keyword id="KW-0399">Innate immunity</keyword>
<keyword id="KW-1267">Proteomics identification</keyword>
<keyword id="KW-1185">Reference proteome</keyword>
<keyword id="KW-0677">Repeat</keyword>
<keyword id="KW-0964">Secreted</keyword>
<keyword id="KW-0732">Signal</keyword>
<keyword id="KW-0768">Sushi</keyword>